<comment type="function">
    <text evidence="2">Component of the acetyl coenzyme A carboxylase (ACC) complex. Biotin carboxylase (BC) catalyzes the carboxylation of biotin on its carrier protein (BCCP) and then the CO(2) group is transferred by the transcarboxylase to acetyl-CoA to form malonyl-CoA.</text>
</comment>
<comment type="catalytic activity">
    <reaction evidence="2">
        <text>N(6)-carboxybiotinyl-L-lysyl-[protein] + acetyl-CoA = N(6)-biotinyl-L-lysyl-[protein] + malonyl-CoA</text>
        <dbReference type="Rhea" id="RHEA:54728"/>
        <dbReference type="Rhea" id="RHEA-COMP:10505"/>
        <dbReference type="Rhea" id="RHEA-COMP:10506"/>
        <dbReference type="ChEBI" id="CHEBI:57288"/>
        <dbReference type="ChEBI" id="CHEBI:57384"/>
        <dbReference type="ChEBI" id="CHEBI:83144"/>
        <dbReference type="ChEBI" id="CHEBI:83145"/>
        <dbReference type="EC" id="2.1.3.15"/>
    </reaction>
</comment>
<comment type="cofactor">
    <cofactor evidence="2">
        <name>Zn(2+)</name>
        <dbReference type="ChEBI" id="CHEBI:29105"/>
    </cofactor>
    <text evidence="2">Binds 1 zinc ion per subunit.</text>
</comment>
<comment type="pathway">
    <text evidence="2">Lipid metabolism; malonyl-CoA biosynthesis; malonyl-CoA from acetyl-CoA: step 1/1.</text>
</comment>
<comment type="subunit">
    <text evidence="1">Acetyl-CoA carboxylase is a heterohexamer composed of biotin carboxyl carrier protein, biotin carboxylase and 2 subunits each of ACCase subunit alpha and ACCase plastid-coded subunit beta (accD).</text>
</comment>
<comment type="subcellular location">
    <subcellularLocation>
        <location evidence="2">Plastid</location>
        <location evidence="2">Chloroplast stroma</location>
    </subcellularLocation>
</comment>
<comment type="similarity">
    <text evidence="2">Belongs to the AccD/PCCB family.</text>
</comment>
<gene>
    <name evidence="2" type="primary">accD</name>
    <name type="synonym">ycf11</name>
    <name type="synonym">zfpA</name>
</gene>
<protein>
    <recommendedName>
        <fullName evidence="2">Acetyl-coenzyme A carboxylase carboxyl transferase subunit beta, chloroplastic</fullName>
        <shortName evidence="2">ACCase subunit beta</shortName>
        <shortName evidence="2">Acetyl-CoA carboxylase carboxyltransferase subunit beta</shortName>
        <ecNumber evidence="2">2.1.3.15</ecNumber>
    </recommendedName>
</protein>
<keyword id="KW-0067">ATP-binding</keyword>
<keyword id="KW-0150">Chloroplast</keyword>
<keyword id="KW-0275">Fatty acid biosynthesis</keyword>
<keyword id="KW-0276">Fatty acid metabolism</keyword>
<keyword id="KW-0444">Lipid biosynthesis</keyword>
<keyword id="KW-0443">Lipid metabolism</keyword>
<keyword id="KW-0479">Metal-binding</keyword>
<keyword id="KW-0547">Nucleotide-binding</keyword>
<keyword id="KW-0934">Plastid</keyword>
<keyword id="KW-0808">Transferase</keyword>
<keyword id="KW-0862">Zinc</keyword>
<keyword id="KW-0863">Zinc-finger</keyword>
<sequence length="316" mass="35827">MSLMNWFEDKRRFGGLIGAFIEKATKGYIFSEREKDRYIKIDTTKGLWTRCDNCENMLYVRFLRQNKRICEECGYHLQMSSTERIELLIDRGTWYPMDEDMTARDVLKFSDEDSYKNRIAFYQKRTGLTDAIQTGIGQLNGIPIALGVMDFQFMGGSMGSVVGEKITRLIEYATRASMPLIIVCSSGGARMQEGTLSLMQMAKISSVLQIHQAQKRLLYIAILTYPTTGGVTASFGMLGDIIIAEPKAYIAFAGKRVIEQTLRQKIPDGFQVAESLFDHGLLDLIVPRNLLKGVLSEIFELYNAAPCKKFQNSFFK</sequence>
<organism>
    <name type="scientific">Marchantia polymorpha</name>
    <name type="common">Common liverwort</name>
    <name type="synonym">Marchantia aquatica</name>
    <dbReference type="NCBI Taxonomy" id="3197"/>
    <lineage>
        <taxon>Eukaryota</taxon>
        <taxon>Viridiplantae</taxon>
        <taxon>Streptophyta</taxon>
        <taxon>Embryophyta</taxon>
        <taxon>Marchantiophyta</taxon>
        <taxon>Marchantiopsida</taxon>
        <taxon>Marchantiidae</taxon>
        <taxon>Marchantiales</taxon>
        <taxon>Marchantiaceae</taxon>
        <taxon>Marchantia</taxon>
    </lineage>
</organism>
<name>ACCD_MARPO</name>
<feature type="chain" id="PRO_0000199786" description="Acetyl-coenzyme A carboxylase carboxyl transferase subunit beta, chloroplastic">
    <location>
        <begin position="1"/>
        <end position="316"/>
    </location>
</feature>
<feature type="domain" description="CoA carboxyltransferase N-terminal" evidence="3">
    <location>
        <begin position="47"/>
        <end position="316"/>
    </location>
</feature>
<feature type="zinc finger region" description="C4-type" evidence="2">
    <location>
        <begin position="51"/>
        <end position="73"/>
    </location>
</feature>
<feature type="binding site" evidence="2">
    <location>
        <position position="51"/>
    </location>
    <ligand>
        <name>Zn(2+)</name>
        <dbReference type="ChEBI" id="CHEBI:29105"/>
    </ligand>
</feature>
<feature type="binding site" evidence="2">
    <location>
        <position position="54"/>
    </location>
    <ligand>
        <name>Zn(2+)</name>
        <dbReference type="ChEBI" id="CHEBI:29105"/>
    </ligand>
</feature>
<feature type="binding site" evidence="2">
    <location>
        <position position="70"/>
    </location>
    <ligand>
        <name>Zn(2+)</name>
        <dbReference type="ChEBI" id="CHEBI:29105"/>
    </ligand>
</feature>
<feature type="binding site" evidence="2">
    <location>
        <position position="73"/>
    </location>
    <ligand>
        <name>Zn(2+)</name>
        <dbReference type="ChEBI" id="CHEBI:29105"/>
    </ligand>
</feature>
<proteinExistence type="inferred from homology"/>
<accession>P12217</accession>
<reference key="1">
    <citation type="journal article" date="1988" name="J. Mol. Biol.">
        <title>Structure and organization of Marchantia polymorpha chloroplast genome. III. Gene organization of the large single copy region from rbcL to trnI(CAU).</title>
        <authorList>
            <person name="Fukuzawa H."/>
            <person name="Kohchi T."/>
            <person name="Sano T."/>
            <person name="Shirai H."/>
            <person name="Umesono K."/>
            <person name="Inokuchi H."/>
            <person name="Ozeki H."/>
            <person name="Ohyama K."/>
        </authorList>
    </citation>
    <scope>NUCLEOTIDE SEQUENCE [GENOMIC DNA]</scope>
</reference>
<reference key="2">
    <citation type="journal article" date="1986" name="Nature">
        <title>Chloroplast gene organization deduced from complete sequence of liverwort Marchantia polymorpha chloroplast DNA.</title>
        <authorList>
            <person name="Ohyama K."/>
            <person name="Fukuzawa H."/>
            <person name="Kohchi T."/>
            <person name="Shirai H."/>
            <person name="Sano T."/>
            <person name="Sano S."/>
            <person name="Umesono K."/>
            <person name="Shiki Y."/>
            <person name="Takeuchi M."/>
            <person name="Chang Z."/>
            <person name="Aota S."/>
            <person name="Inokuchi H."/>
            <person name="Ozeki H."/>
        </authorList>
    </citation>
    <scope>NUCLEOTIDE SEQUENCE [LARGE SCALE GENOMIC DNA]</scope>
</reference>
<dbReference type="EC" id="2.1.3.15" evidence="2"/>
<dbReference type="EMBL" id="X04465">
    <property type="protein sequence ID" value="CAA28093.1"/>
    <property type="molecule type" value="Genomic_DNA"/>
</dbReference>
<dbReference type="PIR" id="A05043">
    <property type="entry name" value="A05043"/>
</dbReference>
<dbReference type="RefSeq" id="NP_039307.1">
    <property type="nucleotide sequence ID" value="NC_001319.1"/>
</dbReference>
<dbReference type="SMR" id="P12217"/>
<dbReference type="GeneID" id="2702596"/>
<dbReference type="UniPathway" id="UPA00655">
    <property type="reaction ID" value="UER00711"/>
</dbReference>
<dbReference type="GO" id="GO:0009317">
    <property type="term" value="C:acetyl-CoA carboxylase complex"/>
    <property type="evidence" value="ECO:0007669"/>
    <property type="project" value="InterPro"/>
</dbReference>
<dbReference type="GO" id="GO:0009570">
    <property type="term" value="C:chloroplast stroma"/>
    <property type="evidence" value="ECO:0007669"/>
    <property type="project" value="UniProtKB-SubCell"/>
</dbReference>
<dbReference type="GO" id="GO:0003989">
    <property type="term" value="F:acetyl-CoA carboxylase activity"/>
    <property type="evidence" value="ECO:0007669"/>
    <property type="project" value="InterPro"/>
</dbReference>
<dbReference type="GO" id="GO:0005524">
    <property type="term" value="F:ATP binding"/>
    <property type="evidence" value="ECO:0007669"/>
    <property type="project" value="UniProtKB-KW"/>
</dbReference>
<dbReference type="GO" id="GO:0016743">
    <property type="term" value="F:carboxyl- or carbamoyltransferase activity"/>
    <property type="evidence" value="ECO:0007669"/>
    <property type="project" value="UniProtKB-UniRule"/>
</dbReference>
<dbReference type="GO" id="GO:0008270">
    <property type="term" value="F:zinc ion binding"/>
    <property type="evidence" value="ECO:0007669"/>
    <property type="project" value="UniProtKB-UniRule"/>
</dbReference>
<dbReference type="GO" id="GO:0006633">
    <property type="term" value="P:fatty acid biosynthetic process"/>
    <property type="evidence" value="ECO:0007669"/>
    <property type="project" value="UniProtKB-KW"/>
</dbReference>
<dbReference type="GO" id="GO:2001295">
    <property type="term" value="P:malonyl-CoA biosynthetic process"/>
    <property type="evidence" value="ECO:0007669"/>
    <property type="project" value="UniProtKB-UniRule"/>
</dbReference>
<dbReference type="Gene3D" id="3.90.226.10">
    <property type="entry name" value="2-enoyl-CoA Hydratase, Chain A, domain 1"/>
    <property type="match status" value="1"/>
</dbReference>
<dbReference type="HAMAP" id="MF_01395">
    <property type="entry name" value="AcetylCoA_CT_beta"/>
    <property type="match status" value="1"/>
</dbReference>
<dbReference type="InterPro" id="IPR034733">
    <property type="entry name" value="AcCoA_carboxyl_beta"/>
</dbReference>
<dbReference type="InterPro" id="IPR000438">
    <property type="entry name" value="Acetyl_CoA_COase_Trfase_b_su"/>
</dbReference>
<dbReference type="InterPro" id="IPR029045">
    <property type="entry name" value="ClpP/crotonase-like_dom_sf"/>
</dbReference>
<dbReference type="InterPro" id="IPR011762">
    <property type="entry name" value="COA_CT_N"/>
</dbReference>
<dbReference type="NCBIfam" id="TIGR00515">
    <property type="entry name" value="accD"/>
    <property type="match status" value="1"/>
</dbReference>
<dbReference type="PANTHER" id="PTHR42995">
    <property type="entry name" value="ACETYL-COENZYME A CARBOXYLASE CARBOXYL TRANSFERASE SUBUNIT BETA, CHLOROPLASTIC"/>
    <property type="match status" value="1"/>
</dbReference>
<dbReference type="PANTHER" id="PTHR42995:SF5">
    <property type="entry name" value="ACETYL-COENZYME A CARBOXYLASE CARBOXYL TRANSFERASE SUBUNIT BETA, CHLOROPLASTIC"/>
    <property type="match status" value="1"/>
</dbReference>
<dbReference type="Pfam" id="PF01039">
    <property type="entry name" value="Carboxyl_trans"/>
    <property type="match status" value="1"/>
</dbReference>
<dbReference type="PRINTS" id="PR01070">
    <property type="entry name" value="ACCCTRFRASEB"/>
</dbReference>
<dbReference type="SUPFAM" id="SSF52096">
    <property type="entry name" value="ClpP/crotonase"/>
    <property type="match status" value="1"/>
</dbReference>
<dbReference type="PROSITE" id="PS50980">
    <property type="entry name" value="COA_CT_NTER"/>
    <property type="match status" value="1"/>
</dbReference>
<geneLocation type="chloroplast"/>
<evidence type="ECO:0000250" key="1"/>
<evidence type="ECO:0000255" key="2">
    <source>
        <dbReference type="HAMAP-Rule" id="MF_01395"/>
    </source>
</evidence>
<evidence type="ECO:0000255" key="3">
    <source>
        <dbReference type="PROSITE-ProRule" id="PRU01136"/>
    </source>
</evidence>